<feature type="chain" id="PRO_0000382502" description="Probable cytosolic iron-sulfur protein assembly protein 1">
    <location>
        <begin position="1"/>
        <end position="438"/>
    </location>
</feature>
<feature type="repeat" description="WD 1">
    <location>
        <begin position="15"/>
        <end position="57"/>
    </location>
</feature>
<feature type="repeat" description="WD 2">
    <location>
        <begin position="61"/>
        <end position="103"/>
    </location>
</feature>
<feature type="repeat" description="WD 3">
    <location>
        <begin position="140"/>
        <end position="179"/>
    </location>
</feature>
<feature type="repeat" description="WD 4">
    <location>
        <begin position="187"/>
        <end position="226"/>
    </location>
</feature>
<feature type="repeat" description="WD 5">
    <location>
        <begin position="254"/>
        <end position="297"/>
    </location>
</feature>
<feature type="repeat" description="WD 6">
    <location>
        <begin position="327"/>
        <end position="366"/>
    </location>
</feature>
<feature type="repeat" description="WD 7">
    <location>
        <begin position="396"/>
        <end position="438"/>
    </location>
</feature>
<feature type="region of interest" description="Disordered" evidence="2">
    <location>
        <begin position="290"/>
        <end position="311"/>
    </location>
</feature>
<feature type="compositionally biased region" description="Polar residues" evidence="2">
    <location>
        <begin position="296"/>
        <end position="305"/>
    </location>
</feature>
<reference key="1">
    <citation type="journal article" date="2015" name="Genome Announc.">
        <title>Genome sequence of Aspergillus flavus NRRL 3357, a strain that causes aflatoxin contamination of food and feed.</title>
        <authorList>
            <person name="Nierman W.C."/>
            <person name="Yu J."/>
            <person name="Fedorova-Abrams N.D."/>
            <person name="Losada L."/>
            <person name="Cleveland T.E."/>
            <person name="Bhatnagar D."/>
            <person name="Bennett J.W."/>
            <person name="Dean R."/>
            <person name="Payne G.A."/>
        </authorList>
    </citation>
    <scope>NUCLEOTIDE SEQUENCE [LARGE SCALE GENOMIC DNA]</scope>
    <source>
        <strain>ATCC 200026 / FGSC A1120 / IAM 13836 / NRRL 3357 / JCM 12722 / SRRC 167</strain>
    </source>
</reference>
<proteinExistence type="inferred from homology"/>
<comment type="function">
    <text evidence="1">Essential component of the cytosolic iron-sulfur (Fe/S) protein assembly machinery. Required for the maturation of extramitochondrial Fe/S proteins.</text>
</comment>
<comment type="similarity">
    <text evidence="1">Belongs to the WD repeat CIA1 family.</text>
</comment>
<organism>
    <name type="scientific">Aspergillus flavus (strain ATCC 200026 / FGSC A1120 / IAM 13836 / NRRL 3357 / JCM 12722 / SRRC 167)</name>
    <dbReference type="NCBI Taxonomy" id="332952"/>
    <lineage>
        <taxon>Eukaryota</taxon>
        <taxon>Fungi</taxon>
        <taxon>Dikarya</taxon>
        <taxon>Ascomycota</taxon>
        <taxon>Pezizomycotina</taxon>
        <taxon>Eurotiomycetes</taxon>
        <taxon>Eurotiomycetidae</taxon>
        <taxon>Eurotiales</taxon>
        <taxon>Aspergillaceae</taxon>
        <taxon>Aspergillus</taxon>
        <taxon>Aspergillus subgen. Circumdati</taxon>
    </lineage>
</organism>
<gene>
    <name type="primary">cia1</name>
    <name type="ORF">AFLA_088680</name>
</gene>
<name>CIAO1_ASPFN</name>
<evidence type="ECO:0000255" key="1">
    <source>
        <dbReference type="HAMAP-Rule" id="MF_03037"/>
    </source>
</evidence>
<evidence type="ECO:0000256" key="2">
    <source>
        <dbReference type="SAM" id="MobiDB-lite"/>
    </source>
</evidence>
<accession>B8MWR8</accession>
<keyword id="KW-0677">Repeat</keyword>
<keyword id="KW-0853">WD repeat</keyword>
<sequence>MTENPTASLTLLSDLTPPSLERTWLTAPHPSLPIVATCSSDKTVRVYSLTNFRLLSTISGGHKRSVRTCAWKPHVQGESVLATGSFDATVGIWRRWDSYGRAEDGTDVRGLSSETLDGNGRDTQEYEDDEEWRFAVLLDGHDSEVKSVSWSPSGMLLATCSRDKSIWIWEDLDDGDNNFETVAVMQEHEGDVKCVAWHPVEECLASASYDNTIRLWREDIDDWGQVACIKGHTGTVWYLDWEGIGNVPSTAAVCEQGTSLSAEWKDQRAMSGPRLASCSDDRTVRIWKRRPKEQRAQSQVGSTGIPSIIRPTGTDETWEEDVLLPQIHELSIYAVAWSKRTGLLASVGADGRIVVYEELFLTSPARTPDTNTPTDTSAIIPRTHTEWVAIAILEGAHGIYEVNHVAWARRADRCRKENEEVLITTADDGSIKVWTLRR</sequence>
<dbReference type="EMBL" id="EQ963472">
    <property type="protein sequence ID" value="EED58169.1"/>
    <property type="molecule type" value="Genomic_DNA"/>
</dbReference>
<dbReference type="RefSeq" id="XP_002373781.1">
    <property type="nucleotide sequence ID" value="XM_002373740.1"/>
</dbReference>
<dbReference type="SMR" id="B8MWR8"/>
<dbReference type="STRING" id="332952.B8MWR8"/>
<dbReference type="EnsemblFungi" id="EED58169">
    <property type="protein sequence ID" value="EED58169"/>
    <property type="gene ID" value="AFLA_088680"/>
</dbReference>
<dbReference type="VEuPathDB" id="FungiDB:AFLA_004462"/>
<dbReference type="eggNOG" id="KOG0645">
    <property type="taxonomic scope" value="Eukaryota"/>
</dbReference>
<dbReference type="HOGENOM" id="CLU_000288_57_8_1"/>
<dbReference type="OMA" id="IREIRWS"/>
<dbReference type="GO" id="GO:0097361">
    <property type="term" value="C:cytosolic [4Fe-4S] assembly targeting complex"/>
    <property type="evidence" value="ECO:0007669"/>
    <property type="project" value="InterPro"/>
</dbReference>
<dbReference type="GO" id="GO:0016226">
    <property type="term" value="P:iron-sulfur cluster assembly"/>
    <property type="evidence" value="ECO:0007669"/>
    <property type="project" value="UniProtKB-UniRule"/>
</dbReference>
<dbReference type="Gene3D" id="2.130.10.10">
    <property type="entry name" value="YVTN repeat-like/Quinoprotein amine dehydrogenase"/>
    <property type="match status" value="1"/>
</dbReference>
<dbReference type="HAMAP" id="MF_03037">
    <property type="entry name" value="ciao1"/>
    <property type="match status" value="1"/>
</dbReference>
<dbReference type="InterPro" id="IPR028608">
    <property type="entry name" value="CIAO1/Cia1"/>
</dbReference>
<dbReference type="InterPro" id="IPR020472">
    <property type="entry name" value="G-protein_beta_WD-40_rep"/>
</dbReference>
<dbReference type="InterPro" id="IPR015943">
    <property type="entry name" value="WD40/YVTN_repeat-like_dom_sf"/>
</dbReference>
<dbReference type="InterPro" id="IPR036322">
    <property type="entry name" value="WD40_repeat_dom_sf"/>
</dbReference>
<dbReference type="InterPro" id="IPR001680">
    <property type="entry name" value="WD40_rpt"/>
</dbReference>
<dbReference type="PANTHER" id="PTHR19920:SF0">
    <property type="entry name" value="CYTOSOLIC IRON-SULFUR PROTEIN ASSEMBLY PROTEIN CIAO1-RELATED"/>
    <property type="match status" value="1"/>
</dbReference>
<dbReference type="PANTHER" id="PTHR19920">
    <property type="entry name" value="WD40 PROTEIN CIAO1"/>
    <property type="match status" value="1"/>
</dbReference>
<dbReference type="Pfam" id="PF00400">
    <property type="entry name" value="WD40"/>
    <property type="match status" value="6"/>
</dbReference>
<dbReference type="PRINTS" id="PR00320">
    <property type="entry name" value="GPROTEINBRPT"/>
</dbReference>
<dbReference type="SMART" id="SM00320">
    <property type="entry name" value="WD40"/>
    <property type="match status" value="7"/>
</dbReference>
<dbReference type="SUPFAM" id="SSF50978">
    <property type="entry name" value="WD40 repeat-like"/>
    <property type="match status" value="1"/>
</dbReference>
<dbReference type="PROSITE" id="PS50082">
    <property type="entry name" value="WD_REPEATS_2"/>
    <property type="match status" value="4"/>
</dbReference>
<dbReference type="PROSITE" id="PS50294">
    <property type="entry name" value="WD_REPEATS_REGION"/>
    <property type="match status" value="2"/>
</dbReference>
<protein>
    <recommendedName>
        <fullName evidence="1">Probable cytosolic iron-sulfur protein assembly protein 1</fullName>
    </recommendedName>
</protein>